<gene>
    <name type="ordered locus">RT0029</name>
</gene>
<name>Y029_RICTY</name>
<comment type="subcellular location">
    <subcellularLocation>
        <location evidence="2">Cell membrane</location>
        <topology evidence="2">Multi-pass membrane protein</topology>
    </subcellularLocation>
</comment>
<comment type="similarity">
    <text evidence="2">Belongs to the TrbL/VirB6 family.</text>
</comment>
<keyword id="KW-1003">Cell membrane</keyword>
<keyword id="KW-0472">Membrane</keyword>
<keyword id="KW-0732">Signal</keyword>
<keyword id="KW-0812">Transmembrane</keyword>
<keyword id="KW-1133">Transmembrane helix</keyword>
<feature type="signal peptide" evidence="1">
    <location>
        <begin position="1"/>
        <end position="20"/>
    </location>
</feature>
<feature type="chain" id="PRO_0000269226" description="Uncharacterized protein RT0029">
    <location>
        <begin position="21"/>
        <end position="886"/>
    </location>
</feature>
<feature type="transmembrane region" description="Helical" evidence="1">
    <location>
        <begin position="520"/>
        <end position="540"/>
    </location>
</feature>
<feature type="transmembrane region" description="Helical" evidence="1">
    <location>
        <begin position="563"/>
        <end position="583"/>
    </location>
</feature>
<feature type="transmembrane region" description="Helical" evidence="1">
    <location>
        <begin position="609"/>
        <end position="629"/>
    </location>
</feature>
<feature type="transmembrane region" description="Helical" evidence="1">
    <location>
        <begin position="647"/>
        <end position="667"/>
    </location>
</feature>
<feature type="transmembrane region" description="Helical" evidence="1">
    <location>
        <begin position="680"/>
        <end position="700"/>
    </location>
</feature>
<feature type="transmembrane region" description="Helical" evidence="1">
    <location>
        <begin position="771"/>
        <end position="791"/>
    </location>
</feature>
<reference key="1">
    <citation type="journal article" date="2004" name="J. Bacteriol.">
        <title>Complete genome sequence of Rickettsia typhi and comparison with sequences of other Rickettsiae.</title>
        <authorList>
            <person name="McLeod M.P."/>
            <person name="Qin X."/>
            <person name="Karpathy S.E."/>
            <person name="Gioia J."/>
            <person name="Highlander S.K."/>
            <person name="Fox G.E."/>
            <person name="McNeill T.Z."/>
            <person name="Jiang H."/>
            <person name="Muzny D."/>
            <person name="Jacob L.S."/>
            <person name="Hawes A.C."/>
            <person name="Sodergren E."/>
            <person name="Gill R."/>
            <person name="Hume J."/>
            <person name="Morgan M."/>
            <person name="Fan G."/>
            <person name="Amin A.G."/>
            <person name="Gibbs R.A."/>
            <person name="Hong C."/>
            <person name="Yu X.-J."/>
            <person name="Walker D.H."/>
            <person name="Weinstock G.M."/>
        </authorList>
    </citation>
    <scope>NUCLEOTIDE SEQUENCE [LARGE SCALE GENOMIC DNA]</scope>
    <source>
        <strain>ATCC VR-144 / Wilmington</strain>
    </source>
</reference>
<organism>
    <name type="scientific">Rickettsia typhi (strain ATCC VR-144 / Wilmington)</name>
    <dbReference type="NCBI Taxonomy" id="257363"/>
    <lineage>
        <taxon>Bacteria</taxon>
        <taxon>Pseudomonadati</taxon>
        <taxon>Pseudomonadota</taxon>
        <taxon>Alphaproteobacteria</taxon>
        <taxon>Rickettsiales</taxon>
        <taxon>Rickettsiaceae</taxon>
        <taxon>Rickettsieae</taxon>
        <taxon>Rickettsia</taxon>
        <taxon>typhus group</taxon>
    </lineage>
</organism>
<proteinExistence type="inferred from homology"/>
<evidence type="ECO:0000255" key="1"/>
<evidence type="ECO:0000305" key="2"/>
<dbReference type="EMBL" id="AE017197">
    <property type="protein sequence ID" value="AAU03517.1"/>
    <property type="molecule type" value="Genomic_DNA"/>
</dbReference>
<dbReference type="RefSeq" id="WP_011190504.1">
    <property type="nucleotide sequence ID" value="NC_006142.1"/>
</dbReference>
<dbReference type="KEGG" id="rty:RT0029"/>
<dbReference type="eggNOG" id="COG3704">
    <property type="taxonomic scope" value="Bacteria"/>
</dbReference>
<dbReference type="HOGENOM" id="CLU_327573_0_0_5"/>
<dbReference type="OrthoDB" id="7164976at2"/>
<dbReference type="Proteomes" id="UP000000604">
    <property type="component" value="Chromosome"/>
</dbReference>
<dbReference type="GO" id="GO:0005886">
    <property type="term" value="C:plasma membrane"/>
    <property type="evidence" value="ECO:0007669"/>
    <property type="project" value="UniProtKB-SubCell"/>
</dbReference>
<dbReference type="GO" id="GO:0030255">
    <property type="term" value="P:protein secretion by the type IV secretion system"/>
    <property type="evidence" value="ECO:0007669"/>
    <property type="project" value="InterPro"/>
</dbReference>
<dbReference type="InterPro" id="IPR007688">
    <property type="entry name" value="Conjugal_tfr_TrbL/VirB6"/>
</dbReference>
<dbReference type="Pfam" id="PF04610">
    <property type="entry name" value="TrbL"/>
    <property type="match status" value="1"/>
</dbReference>
<protein>
    <recommendedName>
        <fullName>Uncharacterized protein RT0029</fullName>
    </recommendedName>
</protein>
<accession>Q68XX5</accession>
<sequence>MKILKSLVLLVLFIVMPAKAHDTFSWMSTSFSGLKGLFGCLEVPEFTSFQESNIGINLSKAGTWQSTGHTVEKGKLLKINWSIAGVTTEPRKYLVLYRIDPRFSTPQVFIKTYNYSKLQFEALGFPRFVTNSNSSIPGAIPPDKELDALSFTKMSDSIKYYARNNVKIEVKAGDVVNISLVSKDNFFTSNTLDNILTEELDSSIFAASALYTQSNLGNFDNRIIYASAKEVCDIIDPSRDPNKPSGCSGTGATTKYKSINSNEALVGKPMMIGAVHNFMGLINSCPEHSGINTRPACYYDQGRGMIIKVGGQVIKGRDQSFVKSGRNSFIYYQATRNGIMDFTSDWQVNNMFSNSVLMSDWIRRFLNYPSFIDYINKNDWSANFLYFGRYSMIVEIGNGANSISSDVQQNINLEYLITYDGTLPDPSIRGTPVDYNFSADAPKDGYLWLRVVNPNSNIQGVVSVNYANYTGTTWFSDIVYNGAIKPITDQFRTFSKNFYIKLIKNSAVQNIAKGSLTLYVIIFGLMFVAGTLKLTAIEVITRICKIAIVAFLIREESWSFFNTYFFSVFTDGIDFFITNVVGATSSRSNIFGFIDPIFDKYTNGRIWGLLFIELLQIHNGLAFIAIITIYSLITYFRAILEVIIGYIIAFIGVTVMISLAPFFIILMLFEKTKSLFDNWISTLLSYVVQPTILLIFFLLIDQVLSEQLLKVVVRACWDTLIPIKIGLDLTNLSIPINFSFTLPFLPGIPFYVPDVPEINRSNIFNNNTNTFLVLFTTALLFYVYCLMSYGLVTFVNIVVGMLTNVTPARISGNYQARSDPVGAVMQDIGSVTTPIKNASMVPARIFKDKIIDQNYKAKKLEGGVEFTNKFFAKRNDVTKKEEGVRE</sequence>